<keyword id="KW-0413">Isomerase</keyword>
<keyword id="KW-1185">Reference proteome</keyword>
<keyword id="KW-0819">tRNA processing</keyword>
<comment type="function">
    <text evidence="1">Responsible for synthesis of pseudouridine from uracil-55 in the psi GC loop of transfer RNAs.</text>
</comment>
<comment type="catalytic activity">
    <reaction evidence="1">
        <text>uridine(55) in tRNA = pseudouridine(55) in tRNA</text>
        <dbReference type="Rhea" id="RHEA:42532"/>
        <dbReference type="Rhea" id="RHEA-COMP:10101"/>
        <dbReference type="Rhea" id="RHEA-COMP:10102"/>
        <dbReference type="ChEBI" id="CHEBI:65314"/>
        <dbReference type="ChEBI" id="CHEBI:65315"/>
        <dbReference type="EC" id="5.4.99.25"/>
    </reaction>
</comment>
<comment type="similarity">
    <text evidence="1">Belongs to the pseudouridine synthase TruB family. Type 1 subfamily.</text>
</comment>
<dbReference type="EC" id="5.4.99.25" evidence="1"/>
<dbReference type="EMBL" id="CP000454">
    <property type="protein sequence ID" value="ABK02818.1"/>
    <property type="molecule type" value="Genomic_DNA"/>
</dbReference>
<dbReference type="RefSeq" id="WP_011691285.1">
    <property type="nucleotide sequence ID" value="NC_008541.1"/>
</dbReference>
<dbReference type="SMR" id="A0JUU8"/>
<dbReference type="STRING" id="290399.Arth_1424"/>
<dbReference type="KEGG" id="art:Arth_1424"/>
<dbReference type="eggNOG" id="COG0130">
    <property type="taxonomic scope" value="Bacteria"/>
</dbReference>
<dbReference type="HOGENOM" id="CLU_032087_0_0_11"/>
<dbReference type="OrthoDB" id="9802309at2"/>
<dbReference type="Proteomes" id="UP000000754">
    <property type="component" value="Chromosome"/>
</dbReference>
<dbReference type="GO" id="GO:0003723">
    <property type="term" value="F:RNA binding"/>
    <property type="evidence" value="ECO:0007669"/>
    <property type="project" value="InterPro"/>
</dbReference>
<dbReference type="GO" id="GO:0160148">
    <property type="term" value="F:tRNA pseudouridine(55) synthase activity"/>
    <property type="evidence" value="ECO:0007669"/>
    <property type="project" value="UniProtKB-EC"/>
</dbReference>
<dbReference type="GO" id="GO:1990481">
    <property type="term" value="P:mRNA pseudouridine synthesis"/>
    <property type="evidence" value="ECO:0007669"/>
    <property type="project" value="TreeGrafter"/>
</dbReference>
<dbReference type="GO" id="GO:0031119">
    <property type="term" value="P:tRNA pseudouridine synthesis"/>
    <property type="evidence" value="ECO:0007669"/>
    <property type="project" value="UniProtKB-UniRule"/>
</dbReference>
<dbReference type="CDD" id="cd02573">
    <property type="entry name" value="PseudoU_synth_EcTruB"/>
    <property type="match status" value="1"/>
</dbReference>
<dbReference type="FunFam" id="3.30.2350.10:FF:000011">
    <property type="entry name" value="tRNA pseudouridine synthase B"/>
    <property type="match status" value="1"/>
</dbReference>
<dbReference type="Gene3D" id="3.30.2350.10">
    <property type="entry name" value="Pseudouridine synthase"/>
    <property type="match status" value="1"/>
</dbReference>
<dbReference type="Gene3D" id="2.30.130.10">
    <property type="entry name" value="PUA domain"/>
    <property type="match status" value="1"/>
</dbReference>
<dbReference type="HAMAP" id="MF_01080">
    <property type="entry name" value="TruB_bact"/>
    <property type="match status" value="1"/>
</dbReference>
<dbReference type="InterPro" id="IPR020103">
    <property type="entry name" value="PsdUridine_synth_cat_dom_sf"/>
</dbReference>
<dbReference type="InterPro" id="IPR002501">
    <property type="entry name" value="PsdUridine_synth_N"/>
</dbReference>
<dbReference type="InterPro" id="IPR015947">
    <property type="entry name" value="PUA-like_sf"/>
</dbReference>
<dbReference type="InterPro" id="IPR036974">
    <property type="entry name" value="PUA_sf"/>
</dbReference>
<dbReference type="InterPro" id="IPR015225">
    <property type="entry name" value="tRNA_psdUridine_synth_fam2_C"/>
</dbReference>
<dbReference type="InterPro" id="IPR014780">
    <property type="entry name" value="tRNA_psdUridine_synth_TruB"/>
</dbReference>
<dbReference type="InterPro" id="IPR032819">
    <property type="entry name" value="TruB_C"/>
</dbReference>
<dbReference type="NCBIfam" id="TIGR00431">
    <property type="entry name" value="TruB"/>
    <property type="match status" value="1"/>
</dbReference>
<dbReference type="PANTHER" id="PTHR13767:SF2">
    <property type="entry name" value="PSEUDOURIDYLATE SYNTHASE TRUB1"/>
    <property type="match status" value="1"/>
</dbReference>
<dbReference type="PANTHER" id="PTHR13767">
    <property type="entry name" value="TRNA-PSEUDOURIDINE SYNTHASE"/>
    <property type="match status" value="1"/>
</dbReference>
<dbReference type="Pfam" id="PF09142">
    <property type="entry name" value="TruB_C"/>
    <property type="match status" value="1"/>
</dbReference>
<dbReference type="Pfam" id="PF16198">
    <property type="entry name" value="TruB_C_2"/>
    <property type="match status" value="1"/>
</dbReference>
<dbReference type="Pfam" id="PF01509">
    <property type="entry name" value="TruB_N"/>
    <property type="match status" value="1"/>
</dbReference>
<dbReference type="SUPFAM" id="SSF55120">
    <property type="entry name" value="Pseudouridine synthase"/>
    <property type="match status" value="1"/>
</dbReference>
<dbReference type="SUPFAM" id="SSF88697">
    <property type="entry name" value="PUA domain-like"/>
    <property type="match status" value="1"/>
</dbReference>
<evidence type="ECO:0000255" key="1">
    <source>
        <dbReference type="HAMAP-Rule" id="MF_01080"/>
    </source>
</evidence>
<sequence>MLSGLVIVDKPQGWTSHDVVGRMRRLAGTRKVGHAGTLDPMATGVLVLGINKATRLLTYIVGTSKTYTATIRLGESTVTDDAEGEVVSSHSAAAVTEGAIRAAVAALTGEIQQVPSSVSAIKVNGERAYARVRSGEDVKLAARPVTIHRFDVHAVRPERAGAVLDVDVTVECSSGTYIRALARDLGEALGTGGHLTALRRTQVGPYTLDQARTLEQLAEELEVLEMSQAARALMPNRELSEDEATEISFGRRIAAGAGAGTPEAATADNPAAAFAPDGSLVALLADAGGYAKPVLVFAPSNEQPGK</sequence>
<proteinExistence type="inferred from homology"/>
<accession>A0JUU8</accession>
<protein>
    <recommendedName>
        <fullName evidence="1">tRNA pseudouridine synthase B</fullName>
        <ecNumber evidence="1">5.4.99.25</ecNumber>
    </recommendedName>
    <alternativeName>
        <fullName evidence="1">tRNA pseudouridine(55) synthase</fullName>
        <shortName evidence="1">Psi55 synthase</shortName>
    </alternativeName>
    <alternativeName>
        <fullName evidence="1">tRNA pseudouridylate synthase</fullName>
    </alternativeName>
    <alternativeName>
        <fullName evidence="1">tRNA-uridine isomerase</fullName>
    </alternativeName>
</protein>
<organism>
    <name type="scientific">Arthrobacter sp. (strain FB24)</name>
    <dbReference type="NCBI Taxonomy" id="290399"/>
    <lineage>
        <taxon>Bacteria</taxon>
        <taxon>Bacillati</taxon>
        <taxon>Actinomycetota</taxon>
        <taxon>Actinomycetes</taxon>
        <taxon>Micrococcales</taxon>
        <taxon>Micrococcaceae</taxon>
        <taxon>Arthrobacter</taxon>
    </lineage>
</organism>
<name>TRUB_ARTS2</name>
<feature type="chain" id="PRO_1000084544" description="tRNA pseudouridine synthase B">
    <location>
        <begin position="1"/>
        <end position="306"/>
    </location>
</feature>
<feature type="active site" description="Nucleophile" evidence="1">
    <location>
        <position position="39"/>
    </location>
</feature>
<reference key="1">
    <citation type="journal article" date="2013" name="Stand. Genomic Sci.">
        <title>Complete genome sequence of Arthrobacter sp. strain FB24.</title>
        <authorList>
            <person name="Nakatsu C.H."/>
            <person name="Barabote R."/>
            <person name="Thompson S."/>
            <person name="Bruce D."/>
            <person name="Detter C."/>
            <person name="Brettin T."/>
            <person name="Han C."/>
            <person name="Beasley F."/>
            <person name="Chen W."/>
            <person name="Konopka A."/>
            <person name="Xie G."/>
        </authorList>
    </citation>
    <scope>NUCLEOTIDE SEQUENCE [LARGE SCALE GENOMIC DNA]</scope>
    <source>
        <strain>FB24</strain>
    </source>
</reference>
<gene>
    <name evidence="1" type="primary">truB</name>
    <name type="ordered locus">Arth_1424</name>
</gene>